<gene>
    <name type="primary">LILRA2</name>
    <name type="synonym">ILT1</name>
    <name type="synonym">LIR7</name>
</gene>
<name>LIRA2_HUMAN</name>
<feature type="signal peptide" evidence="2">
    <location>
        <begin position="1"/>
        <end position="23"/>
    </location>
</feature>
<feature type="chain" id="PRO_0000014817" description="Leukocyte immunoglobulin-like receptor subfamily A member 2">
    <location>
        <begin position="24"/>
        <end position="483"/>
    </location>
</feature>
<feature type="topological domain" description="Extracellular" evidence="2">
    <location>
        <begin position="24"/>
        <end position="449"/>
    </location>
</feature>
<feature type="transmembrane region" description="Helical" evidence="2">
    <location>
        <begin position="450"/>
        <end position="470"/>
    </location>
</feature>
<feature type="topological domain" description="Cytoplasmic" evidence="2">
    <location>
        <begin position="471"/>
        <end position="483"/>
    </location>
</feature>
<feature type="domain" description="Ig-like C2-type 1">
    <location>
        <begin position="27"/>
        <end position="113"/>
    </location>
</feature>
<feature type="domain" description="Ig-like C2-type 2">
    <location>
        <begin position="117"/>
        <end position="222"/>
    </location>
</feature>
<feature type="domain" description="Ig-like C2-type 3">
    <location>
        <begin position="224"/>
        <end position="313"/>
    </location>
</feature>
<feature type="domain" description="Ig-like C2-type 4">
    <location>
        <begin position="324"/>
        <end position="413"/>
    </location>
</feature>
<feature type="modified residue" description="3'-nitrotyrosine" evidence="1">
    <location>
        <position position="404"/>
    </location>
</feature>
<feature type="glycosylation site" description="N-linked (GlcNAc...) asparagine" evidence="2">
    <location>
        <position position="64"/>
    </location>
</feature>
<feature type="glycosylation site" description="N-linked (GlcNAc...) asparagine" evidence="2">
    <location>
        <position position="103"/>
    </location>
</feature>
<feature type="glycosylation site" description="N-linked (GlcNAc...) asparagine" evidence="2">
    <location>
        <position position="138"/>
    </location>
</feature>
<feature type="glycosylation site" description="N-linked (GlcNAc...) asparagine" evidence="2">
    <location>
        <position position="279"/>
    </location>
</feature>
<feature type="glycosylation site" description="N-linked (GlcNAc...) asparagine" evidence="2">
    <location>
        <position position="300"/>
    </location>
</feature>
<feature type="glycosylation site" description="N-linked (GlcNAc...) asparagine" evidence="2">
    <location>
        <position position="339"/>
    </location>
</feature>
<feature type="glycosylation site" description="N-linked (GlcNAc...) asparagine" evidence="2">
    <location>
        <position position="429"/>
    </location>
</feature>
<feature type="disulfide bond" evidence="3 5">
    <location>
        <begin position="49"/>
        <end position="97"/>
    </location>
</feature>
<feature type="disulfide bond" evidence="3 5">
    <location>
        <begin position="143"/>
        <end position="195"/>
    </location>
</feature>
<feature type="disulfide bond" evidence="3">
    <location>
        <begin position="244"/>
        <end position="295"/>
    </location>
</feature>
<feature type="disulfide bond" evidence="3">
    <location>
        <begin position="344"/>
        <end position="395"/>
    </location>
</feature>
<feature type="splice variant" id="VSP_057085" description="In isoform 3." evidence="11">
    <location>
        <begin position="12"/>
        <end position="23"/>
    </location>
</feature>
<feature type="splice variant" id="VSP_008455" description="In isoform 2." evidence="10">
    <original>EAAETLSPSQNKTDSTTT</original>
    <variation>A</variation>
    <location>
        <begin position="419"/>
        <end position="436"/>
    </location>
</feature>
<feature type="splice variant" id="VSP_057086" description="In isoform 3 and isoform 4." evidence="11">
    <original>TSLGQHPQDYTVENLIRMGVAGLVLVVLGILLFEAQHSQRSLQDAAGR</original>
    <variation>SE</variation>
    <location>
        <begin position="436"/>
        <end position="483"/>
    </location>
</feature>
<feature type="sequence variant" id="VAR_016988" description="In dbSNP:rs1834697.">
    <original>H</original>
    <variation>L</variation>
    <location>
        <position position="25"/>
    </location>
</feature>
<feature type="sequence variant" id="VAR_016989" description="In dbSNP:rs1834698.">
    <original>H</original>
    <variation>N</variation>
    <location>
        <position position="25"/>
    </location>
</feature>
<feature type="sequence variant" id="VAR_056051" description="In dbSNP:rs7249811.">
    <original>V</original>
    <variation>G</variation>
    <location>
        <position position="331"/>
    </location>
</feature>
<feature type="sequence variant" id="VAR_056052" description="In dbSNP:rs7249154.">
    <original>G</original>
    <variation>A</variation>
    <location>
        <position position="361"/>
    </location>
</feature>
<feature type="sequence variant" id="VAR_056053" description="In dbSNP:rs7249054.">
    <original>R</original>
    <variation>C</variation>
    <location>
        <position position="381"/>
    </location>
</feature>
<feature type="strand" evidence="14">
    <location>
        <begin position="30"/>
        <end position="35"/>
    </location>
</feature>
<feature type="strand" evidence="14">
    <location>
        <begin position="37"/>
        <end position="42"/>
    </location>
</feature>
<feature type="strand" evidence="14">
    <location>
        <begin position="45"/>
        <end position="50"/>
    </location>
</feature>
<feature type="strand" evidence="14">
    <location>
        <begin position="83"/>
        <end position="86"/>
    </location>
</feature>
<feature type="strand" evidence="14">
    <location>
        <begin position="93"/>
        <end position="95"/>
    </location>
</feature>
<feature type="strand" evidence="14">
    <location>
        <begin position="112"/>
        <end position="117"/>
    </location>
</feature>
<feature type="strand" evidence="14">
    <location>
        <begin position="124"/>
        <end position="129"/>
    </location>
</feature>
<feature type="strand" evidence="14">
    <location>
        <begin position="139"/>
        <end position="144"/>
    </location>
</feature>
<feature type="strand" evidence="14">
    <location>
        <begin position="152"/>
        <end position="156"/>
    </location>
</feature>
<feature type="strand" evidence="14">
    <location>
        <begin position="159"/>
        <end position="161"/>
    </location>
</feature>
<feature type="strand" evidence="14">
    <location>
        <begin position="164"/>
        <end position="170"/>
    </location>
</feature>
<feature type="strand" evidence="14">
    <location>
        <begin position="173"/>
        <end position="175"/>
    </location>
</feature>
<feature type="strand" evidence="14">
    <location>
        <begin position="178"/>
        <end position="182"/>
    </location>
</feature>
<feature type="strand" evidence="14">
    <location>
        <begin position="192"/>
        <end position="195"/>
    </location>
</feature>
<feature type="strand" evidence="14">
    <location>
        <begin position="203"/>
        <end position="205"/>
    </location>
</feature>
<organism>
    <name type="scientific">Homo sapiens</name>
    <name type="common">Human</name>
    <dbReference type="NCBI Taxonomy" id="9606"/>
    <lineage>
        <taxon>Eukaryota</taxon>
        <taxon>Metazoa</taxon>
        <taxon>Chordata</taxon>
        <taxon>Craniata</taxon>
        <taxon>Vertebrata</taxon>
        <taxon>Euteleostomi</taxon>
        <taxon>Mammalia</taxon>
        <taxon>Eutheria</taxon>
        <taxon>Euarchontoglires</taxon>
        <taxon>Primates</taxon>
        <taxon>Haplorrhini</taxon>
        <taxon>Catarrhini</taxon>
        <taxon>Hominidae</taxon>
        <taxon>Homo</taxon>
    </lineage>
</organism>
<keyword id="KW-0002">3D-structure</keyword>
<keyword id="KW-0025">Alternative splicing</keyword>
<keyword id="KW-1003">Cell membrane</keyword>
<keyword id="KW-1015">Disulfide bond</keyword>
<keyword id="KW-0325">Glycoprotein</keyword>
<keyword id="KW-0391">Immunity</keyword>
<keyword id="KW-0393">Immunoglobulin domain</keyword>
<keyword id="KW-0399">Innate immunity</keyword>
<keyword id="KW-0472">Membrane</keyword>
<keyword id="KW-0944">Nitration</keyword>
<keyword id="KW-1267">Proteomics identification</keyword>
<keyword id="KW-0675">Receptor</keyword>
<keyword id="KW-1185">Reference proteome</keyword>
<keyword id="KW-0677">Repeat</keyword>
<keyword id="KW-0964">Secreted</keyword>
<keyword id="KW-0732">Signal</keyword>
<keyword id="KW-0812">Transmembrane</keyword>
<keyword id="KW-1133">Transmembrane helix</keyword>
<protein>
    <recommendedName>
        <fullName>Leukocyte immunoglobulin-like receptor subfamily A member 2</fullName>
    </recommendedName>
    <alternativeName>
        <fullName>CD85 antigen-like family member H</fullName>
    </alternativeName>
    <alternativeName>
        <fullName>Immunoglobulin-like transcript 1</fullName>
        <shortName>ILT-1</shortName>
    </alternativeName>
    <alternativeName>
        <fullName evidence="9">Leukocyte immunoglobulin-like receptor 7</fullName>
        <shortName evidence="9">LIR-7</shortName>
    </alternativeName>
    <cdAntigenName>CD85h</cdAntigenName>
</protein>
<accession>Q8N149</accession>
<accession>O75020</accession>
<comment type="function">
    <text evidence="4 5 6 7">Part of the innate immune responses against microbial infection (PubMed:12529506, PubMed:27572839). Specifically recognizes a set of N-terminally truncated immunoglobulins that are produced via cleavage by proteases from a range of pathogenic bacteria and fungi, including L.pneumophila, M.hyorhinis, S.pneumoniae, S.aureus and C.albicans (PubMed:27572839). Recognizes epitopes that are in part in the variable region of the immunoglobulin light chains, but requires also the constant region for signaling (PubMed:27572839). Binds to a subset of cleaved IgM, IgG3 and IgG4 molecules, but does not bind cleaved IgA1 (PubMed:27572839). Binding of N-terminally truncated immunoglobulins mediates activation of neutrophils (PubMed:27572839). In monocytes, activation leads to the release of CSF2, CF3, IL6, CXCL8 and CCL3 and down-regulates responses to bacterial lipopolysaccharide (LPS), possibly via down-regulation of TLR4 expression and reduced signaling via TLR4 (PubMed:22479404). In eosinophils, activation by ligand binding leads to the release of RNASE2, IL4 and leukotriene C4 (PubMed:12529506). Does not bind class I MHC antigens (PubMed:19230061).</text>
</comment>
<comment type="subunit">
    <text evidence="5">Homodimer.</text>
</comment>
<comment type="subcellular location">
    <subcellularLocation>
        <location evidence="4 6 7">Cell membrane</location>
        <topology evidence="12 13">Single-pass type I membrane protein</topology>
    </subcellularLocation>
</comment>
<comment type="subcellular location">
    <molecule>Isoform 4</molecule>
    <subcellularLocation>
        <location evidence="11">Secreted</location>
    </subcellularLocation>
</comment>
<comment type="alternative products">
    <event type="alternative splicing"/>
    <isoform>
        <id>Q8N149-1</id>
        <name>1</name>
        <sequence type="displayed"/>
    </isoform>
    <isoform>
        <id>Q8N149-2</id>
        <name>2</name>
        <sequence type="described" ref="VSP_008455"/>
    </isoform>
    <isoform>
        <id>Q8N149-3</id>
        <name>3</name>
        <sequence type="described" ref="VSP_057085 VSP_057086"/>
    </isoform>
    <isoform>
        <id>Q8N149-4</id>
        <name>4</name>
        <sequence type="described" ref="VSP_057086"/>
    </isoform>
</comment>
<comment type="tissue specificity">
    <text evidence="4 6 8">Detected on the surface of all peripheral blood monocytes, neutrophils, basophils and eosinophils (at protein level) (PubMed:12529506, PubMed:22479404). Expression levels are very low or not detectable on monocytes, T-cells, B-cells, dendritic cells and natural killer (NK) cells (PubMed:9548455).</text>
</comment>
<proteinExistence type="evidence at protein level"/>
<reference key="1">
    <citation type="journal article" date="1997" name="J. Immunol.">
        <title>A family of human lymphoid and myeloid Ig-like receptors, some of which bind to MHC class I molecules.</title>
        <authorList>
            <person name="Borges L."/>
            <person name="Hsu M.-L."/>
            <person name="Fanger N."/>
            <person name="Kubin M."/>
            <person name="Cosman D."/>
        </authorList>
    </citation>
    <scope>NUCLEOTIDE SEQUENCE [MRNA] (ISOFORM 1)</scope>
    <scope>TISSUE SPECIFICITY</scope>
    <source>
        <tissue>Peripheral blood leukocyte</tissue>
    </source>
</reference>
<reference key="2">
    <citation type="journal article" date="2009" name="Eur. J. Immunol.">
        <title>Alternative mRNA splicing creates transcripts encoding soluble proteins from most LILR genes.</title>
        <authorList>
            <person name="Jones D.C."/>
            <person name="Roghanian A."/>
            <person name="Brown D.P."/>
            <person name="Chang C."/>
            <person name="Allen R.L."/>
            <person name="Trowsdale J."/>
            <person name="Young N.T."/>
        </authorList>
    </citation>
    <scope>NUCLEOTIDE SEQUENCE [MRNA] (ISOFORMS 3 AND 4)</scope>
    <scope>SUBCELLULAR LOCATION (ISOFORM 4)</scope>
    <scope>ALTERNATIVE SPLICING</scope>
</reference>
<reference key="3">
    <citation type="journal article" date="2004" name="Genome Res.">
        <title>The status, quality, and expansion of the NIH full-length cDNA project: the Mammalian Gene Collection (MGC).</title>
        <authorList>
            <consortium name="The MGC Project Team"/>
        </authorList>
    </citation>
    <scope>NUCLEOTIDE SEQUENCE [LARGE SCALE MRNA] (ISOFORM 2)</scope>
    <source>
        <tissue>Lung</tissue>
        <tissue>Pancreas</tissue>
    </source>
</reference>
<reference key="4">
    <citation type="journal article" date="2003" name="Proc. Natl. Acad. Sci. U.S.A.">
        <title>Activation of human eosinophils through leukocyte immunoglobulin-like receptor 7.</title>
        <authorList>
            <person name="Tedla N."/>
            <person name="Bandeira-Melo C."/>
            <person name="Tassinari P."/>
            <person name="Sloane D.E."/>
            <person name="Samplaski M."/>
            <person name="Cosman D."/>
            <person name="Borges L."/>
            <person name="Weller P.F."/>
            <person name="Arm J.P."/>
        </authorList>
    </citation>
    <scope>FUNCTION</scope>
    <scope>TISSUE SPECIFICITY</scope>
    <scope>SUBCELLULAR LOCATION</scope>
</reference>
<reference key="5">
    <citation type="journal article" date="2012" name="PLoS ONE">
        <title>LILRA2 selectively modulates LPS-mediated cytokine production and inhibits phagocytosis by monocytes.</title>
        <authorList>
            <person name="Lu H.K."/>
            <person name="Mitchell A."/>
            <person name="Endoh Y."/>
            <person name="Hampartzoumian T."/>
            <person name="Huynh O."/>
            <person name="Borges L."/>
            <person name="Geczy C."/>
            <person name="Bryant K."/>
            <person name="Tedla N."/>
        </authorList>
    </citation>
    <scope>FUNCTION</scope>
    <scope>SUBCELLULAR LOCATION</scope>
    <scope>TISSUE SPECIFICITY</scope>
</reference>
<reference key="6">
    <citation type="journal article" date="2016" name="Nat. Microbiol.">
        <title>Microbially cleaved immunoglobulins are sensed by the innate immune receptor LILRA2.</title>
        <authorList>
            <person name="Hirayasu K."/>
            <person name="Saito F."/>
            <person name="Suenaga T."/>
            <person name="Shida K."/>
            <person name="Arase N."/>
            <person name="Oikawa K."/>
            <person name="Yamaoka T."/>
            <person name="Murota H."/>
            <person name="Chibana H."/>
            <person name="Nakagawa I."/>
            <person name="Kubori T."/>
            <person name="Nagai H."/>
            <person name="Nakamaru Y."/>
            <person name="Katayama I."/>
            <person name="Colonna M."/>
            <person name="Arase H."/>
        </authorList>
    </citation>
    <scope>FUNCTION</scope>
    <scope>SUBCELLULAR LOCATION</scope>
</reference>
<reference key="7">
    <citation type="journal article" date="2009" name="J. Mol. Biol.">
        <title>Crystal structure of myeloid cell activating receptor leukocyte Ig-like receptor A2 (LILRA2/ILT1/LIR-7) domain swapped dimer: molecular basis for its non-binding to MHC complexes.</title>
        <authorList>
            <person name="Chen Y."/>
            <person name="Gao F."/>
            <person name="Chu F."/>
            <person name="Peng H."/>
            <person name="Zong L."/>
            <person name="Liu Y."/>
            <person name="Tien P."/>
            <person name="Gao G.F."/>
        </authorList>
    </citation>
    <scope>X-RAY CRYSTALLOGRAPHY (2.6 ANGSTROMS) OF 24-219</scope>
    <scope>FUNCTION</scope>
    <scope>SUBUNIT</scope>
    <scope>DISULFIDE BONDS</scope>
</reference>
<sequence length="483" mass="52966">MTPILTVLICLGLSLGPRTHVQAGHLPKPTLWAEPGSVIIQGSPVTLRCQGSLQAEEYHLYRENKSASWVRRIQEPGKNGQFPIPSITWEHAGRYHCQYYSHNHSSEYSDPLELVVTGAYSKPTLSALPSPVVTSGGNVTLQCVSQVAFDGFILCKEGEDEHPQRLNSHSHARGWSWAIFSVGPVSPSRRWSYRCYAYDSNSPYVWSLPSDLLELLVPGVSKKPSLSVQPGPMVAPGESLTLQCVSDVGYDRFVLYKEGERDFLQRPGWQPQAGLSQANFTLGPVSPSHGGQYRCYSAHNLSSEWSAPSDPLDILITGQFYDRPSLSVQPVPTVAPGKNVTLLCQSRGQFHTFLLTKEGAGHPPLHLRSEHQAQQNQAEFRMGPVTSAHVGTYRCYSSLSSNPYLLSLPSDPLELVVSEAAETLSPSQNKTDSTTTSLGQHPQDYTVENLIRMGVAGLVLVVLGILLFEAQHSQRSLQDAAGR</sequence>
<evidence type="ECO:0000250" key="1">
    <source>
        <dbReference type="UniProtKB" id="P59901"/>
    </source>
</evidence>
<evidence type="ECO:0000255" key="2"/>
<evidence type="ECO:0000255" key="3">
    <source>
        <dbReference type="PROSITE-ProRule" id="PRU00114"/>
    </source>
</evidence>
<evidence type="ECO:0000269" key="4">
    <source>
    </source>
</evidence>
<evidence type="ECO:0000269" key="5">
    <source>
    </source>
</evidence>
<evidence type="ECO:0000269" key="6">
    <source>
    </source>
</evidence>
<evidence type="ECO:0000269" key="7">
    <source>
    </source>
</evidence>
<evidence type="ECO:0000269" key="8">
    <source>
    </source>
</evidence>
<evidence type="ECO:0000303" key="9">
    <source>
    </source>
</evidence>
<evidence type="ECO:0000303" key="10">
    <source>
    </source>
</evidence>
<evidence type="ECO:0000303" key="11">
    <source>
    </source>
</evidence>
<evidence type="ECO:0000305" key="12">
    <source>
    </source>
</evidence>
<evidence type="ECO:0000305" key="13">
    <source>
    </source>
</evidence>
<evidence type="ECO:0007829" key="14">
    <source>
        <dbReference type="PDB" id="2OTP"/>
    </source>
</evidence>
<dbReference type="EMBL" id="AF025531">
    <property type="protein sequence ID" value="AAB87665.1"/>
    <property type="molecule type" value="mRNA"/>
</dbReference>
<dbReference type="EMBL" id="EU915609">
    <property type="protein sequence ID" value="ACK56075.1"/>
    <property type="molecule type" value="mRNA"/>
</dbReference>
<dbReference type="EMBL" id="EU915610">
    <property type="protein sequence ID" value="ACK56076.1"/>
    <property type="molecule type" value="mRNA"/>
</dbReference>
<dbReference type="EMBL" id="BC017412">
    <property type="protein sequence ID" value="AAH17412.1"/>
    <property type="molecule type" value="mRNA"/>
</dbReference>
<dbReference type="EMBL" id="BC027916">
    <property type="protein sequence ID" value="AAH27916.1"/>
    <property type="molecule type" value="mRNA"/>
</dbReference>
<dbReference type="CCDS" id="CCDS12900.1">
    <molecule id="Q8N149-2"/>
</dbReference>
<dbReference type="CCDS" id="CCDS46179.1">
    <molecule id="Q8N149-1"/>
</dbReference>
<dbReference type="RefSeq" id="NP_001124389.2">
    <molecule id="Q8N149-1"/>
    <property type="nucleotide sequence ID" value="NM_001130917.3"/>
</dbReference>
<dbReference type="RefSeq" id="NP_006857.2">
    <molecule id="Q8N149-2"/>
    <property type="nucleotide sequence ID" value="NM_006866.4"/>
</dbReference>
<dbReference type="RefSeq" id="XP_011524687.1">
    <property type="nucleotide sequence ID" value="XM_011526385.1"/>
</dbReference>
<dbReference type="RefSeq" id="XP_011524690.1">
    <property type="nucleotide sequence ID" value="XM_011526388.1"/>
</dbReference>
<dbReference type="RefSeq" id="XP_047294068.1">
    <molecule id="Q8N149-3"/>
    <property type="nucleotide sequence ID" value="XM_047438112.1"/>
</dbReference>
<dbReference type="PDB" id="2OTP">
    <property type="method" value="X-ray"/>
    <property type="resolution" value="2.60 A"/>
    <property type="chains" value="A/B=24-219"/>
</dbReference>
<dbReference type="PDBsum" id="2OTP"/>
<dbReference type="SMR" id="Q8N149"/>
<dbReference type="FunCoup" id="Q8N149">
    <property type="interactions" value="503"/>
</dbReference>
<dbReference type="STRING" id="9606.ENSP00000375618"/>
<dbReference type="GlyCosmos" id="Q8N149">
    <property type="glycosylation" value="7 sites, No reported glycans"/>
</dbReference>
<dbReference type="GlyGen" id="Q8N149">
    <property type="glycosylation" value="8 sites"/>
</dbReference>
<dbReference type="iPTMnet" id="Q8N149"/>
<dbReference type="PhosphoSitePlus" id="Q8N149"/>
<dbReference type="BioMuta" id="LILRA2"/>
<dbReference type="DMDM" id="37537906"/>
<dbReference type="jPOST" id="Q8N149"/>
<dbReference type="MassIVE" id="Q8N149"/>
<dbReference type="PaxDb" id="9606-ENSP00000251377"/>
<dbReference type="PeptideAtlas" id="Q8N149"/>
<dbReference type="ProteomicsDB" id="71558">
    <molecule id="Q8N149-1"/>
</dbReference>
<dbReference type="ProteomicsDB" id="71559">
    <molecule id="Q8N149-2"/>
</dbReference>
<dbReference type="Antibodypedia" id="34828">
    <property type="antibodies" value="333 antibodies from 29 providers"/>
</dbReference>
<dbReference type="DNASU" id="11027"/>
<dbReference type="Ensembl" id="ENST00000251376.7">
    <molecule id="Q8N149-2"/>
    <property type="protein sequence ID" value="ENSP00000251376.3"/>
    <property type="gene ID" value="ENSG00000239998.7"/>
</dbReference>
<dbReference type="Ensembl" id="ENST00000251377.7">
    <molecule id="Q8N149-1"/>
    <property type="protein sequence ID" value="ENSP00000251377.3"/>
    <property type="gene ID" value="ENSG00000239998.7"/>
</dbReference>
<dbReference type="Ensembl" id="ENST00000391738.8">
    <molecule id="Q8N149-1"/>
    <property type="protein sequence ID" value="ENSP00000375618.3"/>
    <property type="gene ID" value="ENSG00000239998.7"/>
</dbReference>
<dbReference type="Ensembl" id="ENST00000611940.4">
    <property type="protein sequence ID" value="ENSP00000478981.1"/>
    <property type="gene ID" value="ENSG00000275290.4"/>
</dbReference>
<dbReference type="Ensembl" id="ENST00000613573.4">
    <property type="protein sequence ID" value="ENSP00000479743.1"/>
    <property type="gene ID" value="ENSG00000275290.4"/>
</dbReference>
<dbReference type="Ensembl" id="ENST00000616629.1">
    <property type="protein sequence ID" value="ENSP00000481338.1"/>
    <property type="gene ID" value="ENSG00000275290.4"/>
</dbReference>
<dbReference type="Ensembl" id="ENST00000617409.4">
    <property type="protein sequence ID" value="ENSP00000479914.1"/>
    <property type="gene ID" value="ENSG00000274000.4"/>
</dbReference>
<dbReference type="Ensembl" id="ENST00000620279.4">
    <property type="protein sequence ID" value="ENSP00000480939.1"/>
    <property type="gene ID" value="ENSG00000274000.4"/>
</dbReference>
<dbReference type="Ensembl" id="ENST00000621721.4">
    <property type="protein sequence ID" value="ENSP00000484762.1"/>
    <property type="gene ID" value="ENSG00000278634.4"/>
</dbReference>
<dbReference type="Ensembl" id="ENST00000622640.3">
    <property type="protein sequence ID" value="ENSP00000483906.1"/>
    <property type="gene ID" value="ENSG00000278634.4"/>
</dbReference>
<dbReference type="GeneID" id="11027"/>
<dbReference type="KEGG" id="hsa:11027"/>
<dbReference type="MANE-Select" id="ENST00000391738.8">
    <property type="protein sequence ID" value="ENSP00000375618.3"/>
    <property type="RefSeq nucleotide sequence ID" value="NM_001130917.3"/>
    <property type="RefSeq protein sequence ID" value="NP_001124389.2"/>
</dbReference>
<dbReference type="UCSC" id="uc002qgf.5">
    <molecule id="Q8N149-1"/>
    <property type="organism name" value="human"/>
</dbReference>
<dbReference type="AGR" id="HGNC:6603"/>
<dbReference type="CTD" id="11027"/>
<dbReference type="DisGeNET" id="11027"/>
<dbReference type="GeneCards" id="LILRA2"/>
<dbReference type="HGNC" id="HGNC:6603">
    <property type="gene designation" value="LILRA2"/>
</dbReference>
<dbReference type="HPA" id="ENSG00000239998">
    <property type="expression patterns" value="Tissue enhanced (bone marrow, lymphoid tissue)"/>
</dbReference>
<dbReference type="MIM" id="604812">
    <property type="type" value="gene"/>
</dbReference>
<dbReference type="neXtProt" id="NX_Q8N149"/>
<dbReference type="OpenTargets" id="ENSG00000239998"/>
<dbReference type="PharmGKB" id="PA30377"/>
<dbReference type="VEuPathDB" id="HostDB:ENSG00000239998"/>
<dbReference type="eggNOG" id="ENOG502RYEX">
    <property type="taxonomic scope" value="Eukaryota"/>
</dbReference>
<dbReference type="GeneTree" id="ENSGT01100000263478"/>
<dbReference type="HOGENOM" id="CLU_021100_2_0_1"/>
<dbReference type="InParanoid" id="Q8N149"/>
<dbReference type="OMA" id="GWMWTHR"/>
<dbReference type="OrthoDB" id="9483393at2759"/>
<dbReference type="PAN-GO" id="Q8N149">
    <property type="GO annotations" value="3 GO annotations based on evolutionary models"/>
</dbReference>
<dbReference type="PhylomeDB" id="Q8N149"/>
<dbReference type="TreeFam" id="TF336644"/>
<dbReference type="PathwayCommons" id="Q8N149"/>
<dbReference type="Reactome" id="R-HSA-198933">
    <property type="pathway name" value="Immunoregulatory interactions between a Lymphoid and a non-Lymphoid cell"/>
</dbReference>
<dbReference type="BioGRID-ORCS" id="11027">
    <property type="hits" value="11 hits in 1131 CRISPR screens"/>
</dbReference>
<dbReference type="ChiTaRS" id="LILRA2">
    <property type="organism name" value="human"/>
</dbReference>
<dbReference type="EvolutionaryTrace" id="Q8N149"/>
<dbReference type="GeneWiki" id="LILRA2"/>
<dbReference type="GenomeRNAi" id="11027"/>
<dbReference type="Pharos" id="Q8N149">
    <property type="development level" value="Tbio"/>
</dbReference>
<dbReference type="PRO" id="PR:Q8N149"/>
<dbReference type="Proteomes" id="UP000005640">
    <property type="component" value="Chromosome 19"/>
</dbReference>
<dbReference type="RNAct" id="Q8N149">
    <property type="molecule type" value="protein"/>
</dbReference>
<dbReference type="Bgee" id="ENSG00000239998">
    <property type="expression patterns" value="Expressed in blood and 97 other cell types or tissues"/>
</dbReference>
<dbReference type="ExpressionAtlas" id="Q8N149">
    <property type="expression patterns" value="baseline and differential"/>
</dbReference>
<dbReference type="GO" id="GO:0005576">
    <property type="term" value="C:extracellular region"/>
    <property type="evidence" value="ECO:0007669"/>
    <property type="project" value="UniProtKB-SubCell"/>
</dbReference>
<dbReference type="GO" id="GO:0005886">
    <property type="term" value="C:plasma membrane"/>
    <property type="evidence" value="ECO:0000314"/>
    <property type="project" value="UniProtKB"/>
</dbReference>
<dbReference type="GO" id="GO:0003823">
    <property type="term" value="F:antigen binding"/>
    <property type="evidence" value="ECO:0000304"/>
    <property type="project" value="ProtInc"/>
</dbReference>
<dbReference type="GO" id="GO:0001791">
    <property type="term" value="F:IgM binding"/>
    <property type="evidence" value="ECO:0000314"/>
    <property type="project" value="UniProtKB"/>
</dbReference>
<dbReference type="GO" id="GO:0032396">
    <property type="term" value="F:inhibitory MHC class I receptor activity"/>
    <property type="evidence" value="ECO:0000318"/>
    <property type="project" value="GO_Central"/>
</dbReference>
<dbReference type="GO" id="GO:0038023">
    <property type="term" value="F:signaling receptor activity"/>
    <property type="evidence" value="ECO:0000304"/>
    <property type="project" value="ProtInc"/>
</dbReference>
<dbReference type="GO" id="GO:0006952">
    <property type="term" value="P:defense response"/>
    <property type="evidence" value="ECO:0000304"/>
    <property type="project" value="ProtInc"/>
</dbReference>
<dbReference type="GO" id="GO:0002764">
    <property type="term" value="P:immune response-regulating signaling pathway"/>
    <property type="evidence" value="ECO:0000318"/>
    <property type="project" value="GO_Central"/>
</dbReference>
<dbReference type="GO" id="GO:0045087">
    <property type="term" value="P:innate immune response"/>
    <property type="evidence" value="ECO:0007669"/>
    <property type="project" value="UniProtKB-KW"/>
</dbReference>
<dbReference type="GO" id="GO:0002220">
    <property type="term" value="P:innate immune response activating cell surface receptor signaling pathway"/>
    <property type="evidence" value="ECO:0000314"/>
    <property type="project" value="UniProtKB"/>
</dbReference>
<dbReference type="GO" id="GO:0140105">
    <property type="term" value="P:interleukin-10-mediated signaling pathway"/>
    <property type="evidence" value="ECO:0000318"/>
    <property type="project" value="GO_Central"/>
</dbReference>
<dbReference type="GO" id="GO:0031665">
    <property type="term" value="P:negative regulation of lipopolysaccharide-mediated signaling pathway"/>
    <property type="evidence" value="ECO:0000315"/>
    <property type="project" value="UniProtKB"/>
</dbReference>
<dbReference type="GO" id="GO:0034144">
    <property type="term" value="P:negative regulation of toll-like receptor 4 signaling pathway"/>
    <property type="evidence" value="ECO:0000315"/>
    <property type="project" value="UniProtKB"/>
</dbReference>
<dbReference type="GO" id="GO:0002283">
    <property type="term" value="P:neutrophil activation involved in immune response"/>
    <property type="evidence" value="ECO:0000314"/>
    <property type="project" value="UniProtKB"/>
</dbReference>
<dbReference type="GO" id="GO:0051928">
    <property type="term" value="P:positive regulation of calcium ion transport"/>
    <property type="evidence" value="ECO:0000314"/>
    <property type="project" value="UniProtKB"/>
</dbReference>
<dbReference type="GO" id="GO:0050867">
    <property type="term" value="P:positive regulation of cell activation"/>
    <property type="evidence" value="ECO:0000314"/>
    <property type="project" value="UniProtKB"/>
</dbReference>
<dbReference type="GO" id="GO:0071657">
    <property type="term" value="P:positive regulation of granulocyte colony-stimulating factor production"/>
    <property type="evidence" value="ECO:0000315"/>
    <property type="project" value="UniProtKB"/>
</dbReference>
<dbReference type="GO" id="GO:0032725">
    <property type="term" value="P:positive regulation of granulocyte macrophage colony-stimulating factor production"/>
    <property type="evidence" value="ECO:0000315"/>
    <property type="project" value="UniProtKB"/>
</dbReference>
<dbReference type="GO" id="GO:0032731">
    <property type="term" value="P:positive regulation of interleukin-1 beta production"/>
    <property type="evidence" value="ECO:0000314"/>
    <property type="project" value="UniProtKB"/>
</dbReference>
<dbReference type="GO" id="GO:0032755">
    <property type="term" value="P:positive regulation of interleukin-6 production"/>
    <property type="evidence" value="ECO:0000314"/>
    <property type="project" value="UniProtKB"/>
</dbReference>
<dbReference type="GO" id="GO:0032757">
    <property type="term" value="P:positive regulation of interleukin-8 production"/>
    <property type="evidence" value="ECO:0000315"/>
    <property type="project" value="UniProtKB"/>
</dbReference>
<dbReference type="GO" id="GO:0032760">
    <property type="term" value="P:positive regulation of tumor necrosis factor production"/>
    <property type="evidence" value="ECO:0000314"/>
    <property type="project" value="UniProtKB"/>
</dbReference>
<dbReference type="GO" id="GO:0007165">
    <property type="term" value="P:signal transduction"/>
    <property type="evidence" value="ECO:0000304"/>
    <property type="project" value="ProtInc"/>
</dbReference>
<dbReference type="CDD" id="cd05751">
    <property type="entry name" value="IgC2_D1_LILR_KIR_like"/>
    <property type="match status" value="1"/>
</dbReference>
<dbReference type="FunFam" id="2.60.40.10:FF:000049">
    <property type="entry name" value="Leukocyte immunoglobulin-like receptor subfamily B member 1"/>
    <property type="match status" value="4"/>
</dbReference>
<dbReference type="Gene3D" id="2.60.40.10">
    <property type="entry name" value="Immunoglobulins"/>
    <property type="match status" value="4"/>
</dbReference>
<dbReference type="InterPro" id="IPR016332">
    <property type="entry name" value="A1B_glyco/leuk_Ig-like_rcpt"/>
</dbReference>
<dbReference type="InterPro" id="IPR007110">
    <property type="entry name" value="Ig-like_dom"/>
</dbReference>
<dbReference type="InterPro" id="IPR036179">
    <property type="entry name" value="Ig-like_dom_sf"/>
</dbReference>
<dbReference type="InterPro" id="IPR013783">
    <property type="entry name" value="Ig-like_fold"/>
</dbReference>
<dbReference type="InterPro" id="IPR050412">
    <property type="entry name" value="Ig-like_Receptors_ImmuneReg"/>
</dbReference>
<dbReference type="InterPro" id="IPR003599">
    <property type="entry name" value="Ig_sub"/>
</dbReference>
<dbReference type="InterPro" id="IPR003598">
    <property type="entry name" value="Ig_sub2"/>
</dbReference>
<dbReference type="InterPro" id="IPR013151">
    <property type="entry name" value="Immunoglobulin_dom"/>
</dbReference>
<dbReference type="PANTHER" id="PTHR11738:SF86">
    <property type="entry name" value="LEUKOCYTE IMMUNOGLOBULIN-LIKE RECEPTOR SUBFAMILY A MEMBER 2"/>
    <property type="match status" value="1"/>
</dbReference>
<dbReference type="PANTHER" id="PTHR11738">
    <property type="entry name" value="MHC CLASS I NK CELL RECEPTOR"/>
    <property type="match status" value="1"/>
</dbReference>
<dbReference type="Pfam" id="PF00047">
    <property type="entry name" value="ig"/>
    <property type="match status" value="2"/>
</dbReference>
<dbReference type="Pfam" id="PF13895">
    <property type="entry name" value="Ig_2"/>
    <property type="match status" value="1"/>
</dbReference>
<dbReference type="PIRSF" id="PIRSF001979">
    <property type="entry name" value="Alpha_1B_glycoprot_prd"/>
    <property type="match status" value="1"/>
</dbReference>
<dbReference type="SMART" id="SM00409">
    <property type="entry name" value="IG"/>
    <property type="match status" value="4"/>
</dbReference>
<dbReference type="SMART" id="SM00408">
    <property type="entry name" value="IGc2"/>
    <property type="match status" value="3"/>
</dbReference>
<dbReference type="SUPFAM" id="SSF48726">
    <property type="entry name" value="Immunoglobulin"/>
    <property type="match status" value="4"/>
</dbReference>
<dbReference type="PROSITE" id="PS50835">
    <property type="entry name" value="IG_LIKE"/>
    <property type="match status" value="2"/>
</dbReference>